<feature type="signal peptide" evidence="2">
    <location>
        <begin position="1"/>
        <end position="25"/>
    </location>
</feature>
<feature type="chain" id="PRO_0000434714" description="AAA-ATPase At3g50940" evidence="2">
    <location>
        <begin position="26"/>
        <end position="451"/>
    </location>
</feature>
<feature type="binding site" evidence="2">
    <location>
        <begin position="254"/>
        <end position="261"/>
    </location>
    <ligand>
        <name>ATP</name>
        <dbReference type="ChEBI" id="CHEBI:30616"/>
    </ligand>
</feature>
<feature type="sequence conflict" description="In Ref. 3; BAC41960." evidence="4" ref="3">
    <original>A</original>
    <variation>S</variation>
    <location>
        <position position="417"/>
    </location>
</feature>
<proteinExistence type="evidence at transcript level"/>
<sequence length="451" mass="51470">MSSSSESHLATAKTALTAVASVAAAAILARSVVQDYMPNEVHEYISHGFRRFFSYFSYQMTAVIEEFGGFEHNQVFEAAEAYLSTKISNSTRRIKVNKLEKQSNYSVTVERDEEVVDIFDGVKLSWILVCRHVDKKDFRNPRDLNSTLKSEVRSYELSFRKKFKNMVLESYLPFVVEQAASIKQKFKTLKIFTVDSYSVEWTSVTLDHPSTFRTLALDPEVKKNLVEDLDRFVQRKGFYGRVGKAWKRGYLLYGPPGTGKSSLIAAIANHLNFDIYDLDLTSLNNNAELRRLLMSTANRSILVVEDIDCSIELKDRSTDQENNDPLHKTVTLSGLLNFVDGLWSSCGNERIIVFTTNYREKLDPALLRPGRMDMHIHMSYCTPAAFKVLASNYLEIQDHILFEQIEEFIREIEVTPAEVAEQLMRSDSVDKVLQGLVEFLKAKKQIDNSKA</sequence>
<gene>
    <name evidence="6" type="ordered locus">At3g50940</name>
    <name evidence="7" type="ORF">F18B3.220</name>
</gene>
<comment type="catalytic activity">
    <reaction evidence="1">
        <text>ATP + H2O = ADP + phosphate + H(+)</text>
        <dbReference type="Rhea" id="RHEA:13065"/>
        <dbReference type="ChEBI" id="CHEBI:15377"/>
        <dbReference type="ChEBI" id="CHEBI:15378"/>
        <dbReference type="ChEBI" id="CHEBI:30616"/>
        <dbReference type="ChEBI" id="CHEBI:43474"/>
        <dbReference type="ChEBI" id="CHEBI:456216"/>
    </reaction>
</comment>
<comment type="cofactor">
    <cofactor evidence="1">
        <name>Mg(2+)</name>
        <dbReference type="ChEBI" id="CHEBI:18420"/>
    </cofactor>
</comment>
<comment type="induction">
    <text evidence="3">Induced in roots by salt stress.</text>
</comment>
<comment type="similarity">
    <text evidence="4">Belongs to the AAA ATPase family. BCS1 subfamily.</text>
</comment>
<comment type="sequence caution" evidence="4">
    <conflict type="erroneous gene model prediction">
        <sequence resource="EMBL-CDS" id="CAB42923"/>
    </conflict>
</comment>
<dbReference type="EC" id="3.6.1.-" evidence="1"/>
<dbReference type="EMBL" id="AL049862">
    <property type="protein sequence ID" value="CAB42923.1"/>
    <property type="status" value="ALT_SEQ"/>
    <property type="molecule type" value="Genomic_DNA"/>
</dbReference>
<dbReference type="EMBL" id="CP002686">
    <property type="protein sequence ID" value="AEE78729.1"/>
    <property type="molecule type" value="Genomic_DNA"/>
</dbReference>
<dbReference type="EMBL" id="AK117288">
    <property type="protein sequence ID" value="BAC41960.2"/>
    <property type="molecule type" value="mRNA"/>
</dbReference>
<dbReference type="EMBL" id="BT026134">
    <property type="protein sequence ID" value="ABG48490.1"/>
    <property type="molecule type" value="mRNA"/>
</dbReference>
<dbReference type="PIR" id="T08415">
    <property type="entry name" value="T08415"/>
</dbReference>
<dbReference type="RefSeq" id="NP_190663.2">
    <property type="nucleotide sequence ID" value="NM_114954.4"/>
</dbReference>
<dbReference type="SMR" id="Q147F9"/>
<dbReference type="FunCoup" id="Q147F9">
    <property type="interactions" value="1471"/>
</dbReference>
<dbReference type="IntAct" id="Q147F9">
    <property type="interactions" value="1"/>
</dbReference>
<dbReference type="STRING" id="3702.Q147F9"/>
<dbReference type="PaxDb" id="3702-AT3G50940.1"/>
<dbReference type="ProteomicsDB" id="245125"/>
<dbReference type="EnsemblPlants" id="AT3G50940.1">
    <property type="protein sequence ID" value="AT3G50940.1"/>
    <property type="gene ID" value="AT3G50940"/>
</dbReference>
<dbReference type="GeneID" id="824258"/>
<dbReference type="Gramene" id="AT3G50940.1">
    <property type="protein sequence ID" value="AT3G50940.1"/>
    <property type="gene ID" value="AT3G50940"/>
</dbReference>
<dbReference type="KEGG" id="ath:AT3G50940"/>
<dbReference type="Araport" id="AT3G50940"/>
<dbReference type="TAIR" id="AT3G50940"/>
<dbReference type="eggNOG" id="KOG0743">
    <property type="taxonomic scope" value="Eukaryota"/>
</dbReference>
<dbReference type="HOGENOM" id="CLU_010189_0_1_1"/>
<dbReference type="InParanoid" id="Q147F9"/>
<dbReference type="OMA" id="LHDIWEA"/>
<dbReference type="PhylomeDB" id="Q147F9"/>
<dbReference type="PRO" id="PR:Q147F9"/>
<dbReference type="Proteomes" id="UP000006548">
    <property type="component" value="Chromosome 3"/>
</dbReference>
<dbReference type="ExpressionAtlas" id="Q147F9">
    <property type="expression patterns" value="baseline and differential"/>
</dbReference>
<dbReference type="GO" id="GO:0005524">
    <property type="term" value="F:ATP binding"/>
    <property type="evidence" value="ECO:0007669"/>
    <property type="project" value="UniProtKB-KW"/>
</dbReference>
<dbReference type="GO" id="GO:0016887">
    <property type="term" value="F:ATP hydrolysis activity"/>
    <property type="evidence" value="ECO:0007669"/>
    <property type="project" value="InterPro"/>
</dbReference>
<dbReference type="GO" id="GO:0009651">
    <property type="term" value="P:response to salt stress"/>
    <property type="evidence" value="ECO:0000270"/>
    <property type="project" value="UniProtKB"/>
</dbReference>
<dbReference type="CDD" id="cd19510">
    <property type="entry name" value="RecA-like_BCS1"/>
    <property type="match status" value="1"/>
</dbReference>
<dbReference type="Gene3D" id="6.10.280.40">
    <property type="match status" value="1"/>
</dbReference>
<dbReference type="Gene3D" id="3.40.50.300">
    <property type="entry name" value="P-loop containing nucleotide triphosphate hydrolases"/>
    <property type="match status" value="1"/>
</dbReference>
<dbReference type="InterPro" id="IPR003593">
    <property type="entry name" value="AAA+_ATPase"/>
</dbReference>
<dbReference type="InterPro" id="IPR025753">
    <property type="entry name" value="AAA_N_dom"/>
</dbReference>
<dbReference type="InterPro" id="IPR003959">
    <property type="entry name" value="ATPase_AAA_core"/>
</dbReference>
<dbReference type="InterPro" id="IPR003960">
    <property type="entry name" value="ATPase_AAA_CS"/>
</dbReference>
<dbReference type="InterPro" id="IPR050747">
    <property type="entry name" value="Mitochondrial_chaperone_BCS1"/>
</dbReference>
<dbReference type="InterPro" id="IPR027417">
    <property type="entry name" value="P-loop_NTPase"/>
</dbReference>
<dbReference type="PANTHER" id="PTHR23070">
    <property type="entry name" value="BCS1 AAA-TYPE ATPASE"/>
    <property type="match status" value="1"/>
</dbReference>
<dbReference type="Pfam" id="PF00004">
    <property type="entry name" value="AAA"/>
    <property type="match status" value="1"/>
</dbReference>
<dbReference type="Pfam" id="PF14363">
    <property type="entry name" value="AAA_assoc"/>
    <property type="match status" value="1"/>
</dbReference>
<dbReference type="SMART" id="SM00382">
    <property type="entry name" value="AAA"/>
    <property type="match status" value="1"/>
</dbReference>
<dbReference type="SUPFAM" id="SSF52540">
    <property type="entry name" value="P-loop containing nucleoside triphosphate hydrolases"/>
    <property type="match status" value="1"/>
</dbReference>
<dbReference type="PROSITE" id="PS00674">
    <property type="entry name" value="AAA"/>
    <property type="match status" value="1"/>
</dbReference>
<name>AATPC_ARATH</name>
<protein>
    <recommendedName>
        <fullName>AAA-ATPase At3g50940</fullName>
        <ecNumber evidence="1">3.6.1.-</ecNumber>
    </recommendedName>
</protein>
<evidence type="ECO:0000250" key="1">
    <source>
        <dbReference type="UniProtKB" id="Q9FLD5"/>
    </source>
</evidence>
<evidence type="ECO:0000255" key="2"/>
<evidence type="ECO:0000269" key="3">
    <source>
    </source>
</evidence>
<evidence type="ECO:0000305" key="4"/>
<evidence type="ECO:0000312" key="5">
    <source>
        <dbReference type="EMBL" id="ABG48490.1"/>
    </source>
</evidence>
<evidence type="ECO:0000312" key="6">
    <source>
        <dbReference type="EMBL" id="AEE78729.1"/>
    </source>
</evidence>
<evidence type="ECO:0000312" key="7">
    <source>
        <dbReference type="EMBL" id="CAB42923.1"/>
    </source>
</evidence>
<accession>Q147F9</accession>
<accession>Q8GZ01</accession>
<accession>Q9SVK5</accession>
<keyword id="KW-0067">ATP-binding</keyword>
<keyword id="KW-0378">Hydrolase</keyword>
<keyword id="KW-0460">Magnesium</keyword>
<keyword id="KW-0547">Nucleotide-binding</keyword>
<keyword id="KW-1185">Reference proteome</keyword>
<keyword id="KW-0732">Signal</keyword>
<reference key="1">
    <citation type="journal article" date="2000" name="Nature">
        <title>Sequence and analysis of chromosome 3 of the plant Arabidopsis thaliana.</title>
        <authorList>
            <person name="Salanoubat M."/>
            <person name="Lemcke K."/>
            <person name="Rieger M."/>
            <person name="Ansorge W."/>
            <person name="Unseld M."/>
            <person name="Fartmann B."/>
            <person name="Valle G."/>
            <person name="Bloecker H."/>
            <person name="Perez-Alonso M."/>
            <person name="Obermaier B."/>
            <person name="Delseny M."/>
            <person name="Boutry M."/>
            <person name="Grivell L.A."/>
            <person name="Mache R."/>
            <person name="Puigdomenech P."/>
            <person name="De Simone V."/>
            <person name="Choisne N."/>
            <person name="Artiguenave F."/>
            <person name="Robert C."/>
            <person name="Brottier P."/>
            <person name="Wincker P."/>
            <person name="Cattolico L."/>
            <person name="Weissenbach J."/>
            <person name="Saurin W."/>
            <person name="Quetier F."/>
            <person name="Schaefer M."/>
            <person name="Mueller-Auer S."/>
            <person name="Gabel C."/>
            <person name="Fuchs M."/>
            <person name="Benes V."/>
            <person name="Wurmbach E."/>
            <person name="Drzonek H."/>
            <person name="Erfle H."/>
            <person name="Jordan N."/>
            <person name="Bangert S."/>
            <person name="Wiedelmann R."/>
            <person name="Kranz H."/>
            <person name="Voss H."/>
            <person name="Holland R."/>
            <person name="Brandt P."/>
            <person name="Nyakatura G."/>
            <person name="Vezzi A."/>
            <person name="D'Angelo M."/>
            <person name="Pallavicini A."/>
            <person name="Toppo S."/>
            <person name="Simionati B."/>
            <person name="Conrad A."/>
            <person name="Hornischer K."/>
            <person name="Kauer G."/>
            <person name="Loehnert T.-H."/>
            <person name="Nordsiek G."/>
            <person name="Reichelt J."/>
            <person name="Scharfe M."/>
            <person name="Schoen O."/>
            <person name="Bargues M."/>
            <person name="Terol J."/>
            <person name="Climent J."/>
            <person name="Navarro P."/>
            <person name="Collado C."/>
            <person name="Perez-Perez A."/>
            <person name="Ottenwaelder B."/>
            <person name="Duchemin D."/>
            <person name="Cooke R."/>
            <person name="Laudie M."/>
            <person name="Berger-Llauro C."/>
            <person name="Purnelle B."/>
            <person name="Masuy D."/>
            <person name="de Haan M."/>
            <person name="Maarse A.C."/>
            <person name="Alcaraz J.-P."/>
            <person name="Cottet A."/>
            <person name="Casacuberta E."/>
            <person name="Monfort A."/>
            <person name="Argiriou A."/>
            <person name="Flores M."/>
            <person name="Liguori R."/>
            <person name="Vitale D."/>
            <person name="Mannhaupt G."/>
            <person name="Haase D."/>
            <person name="Schoof H."/>
            <person name="Rudd S."/>
            <person name="Zaccaria P."/>
            <person name="Mewes H.-W."/>
            <person name="Mayer K.F.X."/>
            <person name="Kaul S."/>
            <person name="Town C.D."/>
            <person name="Koo H.L."/>
            <person name="Tallon L.J."/>
            <person name="Jenkins J."/>
            <person name="Rooney T."/>
            <person name="Rizzo M."/>
            <person name="Walts A."/>
            <person name="Utterback T."/>
            <person name="Fujii C.Y."/>
            <person name="Shea T.P."/>
            <person name="Creasy T.H."/>
            <person name="Haas B."/>
            <person name="Maiti R."/>
            <person name="Wu D."/>
            <person name="Peterson J."/>
            <person name="Van Aken S."/>
            <person name="Pai G."/>
            <person name="Militscher J."/>
            <person name="Sellers P."/>
            <person name="Gill J.E."/>
            <person name="Feldblyum T.V."/>
            <person name="Preuss D."/>
            <person name="Lin X."/>
            <person name="Nierman W.C."/>
            <person name="Salzberg S.L."/>
            <person name="White O."/>
            <person name="Venter J.C."/>
            <person name="Fraser C.M."/>
            <person name="Kaneko T."/>
            <person name="Nakamura Y."/>
            <person name="Sato S."/>
            <person name="Kato T."/>
            <person name="Asamizu E."/>
            <person name="Sasamoto S."/>
            <person name="Kimura T."/>
            <person name="Idesawa K."/>
            <person name="Kawashima K."/>
            <person name="Kishida Y."/>
            <person name="Kiyokawa C."/>
            <person name="Kohara M."/>
            <person name="Matsumoto M."/>
            <person name="Matsuno A."/>
            <person name="Muraki A."/>
            <person name="Nakayama S."/>
            <person name="Nakazaki N."/>
            <person name="Shinpo S."/>
            <person name="Takeuchi C."/>
            <person name="Wada T."/>
            <person name="Watanabe A."/>
            <person name="Yamada M."/>
            <person name="Yasuda M."/>
            <person name="Tabata S."/>
        </authorList>
    </citation>
    <scope>NUCLEOTIDE SEQUENCE [LARGE SCALE GENOMIC DNA]</scope>
    <source>
        <strain>cv. Columbia</strain>
    </source>
</reference>
<reference key="2">
    <citation type="journal article" date="2017" name="Plant J.">
        <title>Araport11: a complete reannotation of the Arabidopsis thaliana reference genome.</title>
        <authorList>
            <person name="Cheng C.Y."/>
            <person name="Krishnakumar V."/>
            <person name="Chan A.P."/>
            <person name="Thibaud-Nissen F."/>
            <person name="Schobel S."/>
            <person name="Town C.D."/>
        </authorList>
    </citation>
    <scope>GENOME REANNOTATION</scope>
    <source>
        <strain>cv. Columbia</strain>
    </source>
</reference>
<reference key="3">
    <citation type="journal article" date="2002" name="Science">
        <title>Functional annotation of a full-length Arabidopsis cDNA collection.</title>
        <authorList>
            <person name="Seki M."/>
            <person name="Narusaka M."/>
            <person name="Kamiya A."/>
            <person name="Ishida J."/>
            <person name="Satou M."/>
            <person name="Sakurai T."/>
            <person name="Nakajima M."/>
            <person name="Enju A."/>
            <person name="Akiyama K."/>
            <person name="Oono Y."/>
            <person name="Muramatsu M."/>
            <person name="Hayashizaki Y."/>
            <person name="Kawai J."/>
            <person name="Carninci P."/>
            <person name="Itoh M."/>
            <person name="Ishii Y."/>
            <person name="Arakawa T."/>
            <person name="Shibata K."/>
            <person name="Shinagawa A."/>
            <person name="Shinozaki K."/>
        </authorList>
    </citation>
    <scope>NUCLEOTIDE SEQUENCE [LARGE SCALE MRNA]</scope>
    <source>
        <strain>cv. Columbia</strain>
    </source>
</reference>
<reference key="4">
    <citation type="submission" date="2006-07" db="EMBL/GenBank/DDBJ databases">
        <title>Arabidopsis ORF clones.</title>
        <authorList>
            <person name="Kim C.J."/>
            <person name="Chen H."/>
            <person name="Quinitio C."/>
            <person name="Shinn P."/>
            <person name="Ecker J.R."/>
        </authorList>
    </citation>
    <scope>NUCLEOTIDE SEQUENCE [LARGE SCALE MRNA]</scope>
    <source>
        <strain>cv. Columbia</strain>
    </source>
</reference>
<reference key="5">
    <citation type="journal article" date="2006" name="J. Exp. Bot.">
        <title>Dissecting salt stress pathways.</title>
        <authorList>
            <person name="Ma S."/>
            <person name="Gong Q."/>
            <person name="Bohnert H.J."/>
        </authorList>
    </citation>
    <scope>INDUCTION BY SALT</scope>
    <source>
        <strain>cv. Columbia</strain>
    </source>
</reference>
<organism evidence="5">
    <name type="scientific">Arabidopsis thaliana</name>
    <name type="common">Mouse-ear cress</name>
    <dbReference type="NCBI Taxonomy" id="3702"/>
    <lineage>
        <taxon>Eukaryota</taxon>
        <taxon>Viridiplantae</taxon>
        <taxon>Streptophyta</taxon>
        <taxon>Embryophyta</taxon>
        <taxon>Tracheophyta</taxon>
        <taxon>Spermatophyta</taxon>
        <taxon>Magnoliopsida</taxon>
        <taxon>eudicotyledons</taxon>
        <taxon>Gunneridae</taxon>
        <taxon>Pentapetalae</taxon>
        <taxon>rosids</taxon>
        <taxon>malvids</taxon>
        <taxon>Brassicales</taxon>
        <taxon>Brassicaceae</taxon>
        <taxon>Camelineae</taxon>
        <taxon>Arabidopsis</taxon>
    </lineage>
</organism>